<protein>
    <recommendedName>
        <fullName evidence="1">Ribosomal RNA large subunit methyltransferase E</fullName>
        <ecNumber evidence="1">2.1.1.166</ecNumber>
    </recommendedName>
    <alternativeName>
        <fullName evidence="1">23S rRNA Um2552 methyltransferase</fullName>
    </alternativeName>
    <alternativeName>
        <fullName evidence="1">rRNA (uridine-2'-O-)-methyltransferase</fullName>
    </alternativeName>
</protein>
<comment type="function">
    <text evidence="1">Specifically methylates the uridine in position 2552 of 23S rRNA at the 2'-O position of the ribose in the fully assembled 50S ribosomal subunit.</text>
</comment>
<comment type="catalytic activity">
    <reaction evidence="1">
        <text>uridine(2552) in 23S rRNA + S-adenosyl-L-methionine = 2'-O-methyluridine(2552) in 23S rRNA + S-adenosyl-L-homocysteine + H(+)</text>
        <dbReference type="Rhea" id="RHEA:42720"/>
        <dbReference type="Rhea" id="RHEA-COMP:10202"/>
        <dbReference type="Rhea" id="RHEA-COMP:10203"/>
        <dbReference type="ChEBI" id="CHEBI:15378"/>
        <dbReference type="ChEBI" id="CHEBI:57856"/>
        <dbReference type="ChEBI" id="CHEBI:59789"/>
        <dbReference type="ChEBI" id="CHEBI:65315"/>
        <dbReference type="ChEBI" id="CHEBI:74478"/>
        <dbReference type="EC" id="2.1.1.166"/>
    </reaction>
</comment>
<comment type="subcellular location">
    <subcellularLocation>
        <location evidence="1">Cytoplasm</location>
    </subcellularLocation>
</comment>
<comment type="similarity">
    <text evidence="1">Belongs to the class I-like SAM-binding methyltransferase superfamily. RNA methyltransferase RlmE family.</text>
</comment>
<gene>
    <name evidence="1" type="primary">rlmE</name>
    <name evidence="1" type="synonym">ftsJ</name>
    <name evidence="1" type="synonym">rrmJ</name>
    <name type="ordered locus">VFMJ11_0478</name>
</gene>
<reference key="1">
    <citation type="submission" date="2008-08" db="EMBL/GenBank/DDBJ databases">
        <title>Complete sequence of Vibrio fischeri strain MJ11.</title>
        <authorList>
            <person name="Mandel M.J."/>
            <person name="Stabb E.V."/>
            <person name="Ruby E.G."/>
            <person name="Ferriera S."/>
            <person name="Johnson J."/>
            <person name="Kravitz S."/>
            <person name="Beeson K."/>
            <person name="Sutton G."/>
            <person name="Rogers Y.-H."/>
            <person name="Friedman R."/>
            <person name="Frazier M."/>
            <person name="Venter J.C."/>
        </authorList>
    </citation>
    <scope>NUCLEOTIDE SEQUENCE [LARGE SCALE GENOMIC DNA]</scope>
    <source>
        <strain>MJ11</strain>
    </source>
</reference>
<name>RLME_ALIFM</name>
<dbReference type="EC" id="2.1.1.166" evidence="1"/>
<dbReference type="EMBL" id="CP001139">
    <property type="protein sequence ID" value="ACH65749.1"/>
    <property type="molecule type" value="Genomic_DNA"/>
</dbReference>
<dbReference type="RefSeq" id="WP_005417666.1">
    <property type="nucleotide sequence ID" value="NC_011184.1"/>
</dbReference>
<dbReference type="SMR" id="B5FA72"/>
<dbReference type="KEGG" id="vfm:VFMJ11_0478"/>
<dbReference type="HOGENOM" id="CLU_009422_4_0_6"/>
<dbReference type="Proteomes" id="UP000001857">
    <property type="component" value="Chromosome I"/>
</dbReference>
<dbReference type="GO" id="GO:0005737">
    <property type="term" value="C:cytoplasm"/>
    <property type="evidence" value="ECO:0007669"/>
    <property type="project" value="UniProtKB-SubCell"/>
</dbReference>
<dbReference type="GO" id="GO:0008650">
    <property type="term" value="F:rRNA (uridine-2'-O-)-methyltransferase activity"/>
    <property type="evidence" value="ECO:0007669"/>
    <property type="project" value="UniProtKB-UniRule"/>
</dbReference>
<dbReference type="FunFam" id="3.40.50.150:FF:000005">
    <property type="entry name" value="Ribosomal RNA large subunit methyltransferase E"/>
    <property type="match status" value="1"/>
</dbReference>
<dbReference type="Gene3D" id="3.40.50.150">
    <property type="entry name" value="Vaccinia Virus protein VP39"/>
    <property type="match status" value="1"/>
</dbReference>
<dbReference type="HAMAP" id="MF_01547">
    <property type="entry name" value="RNA_methyltr_E"/>
    <property type="match status" value="1"/>
</dbReference>
<dbReference type="InterPro" id="IPR050082">
    <property type="entry name" value="RNA_methyltr_RlmE"/>
</dbReference>
<dbReference type="InterPro" id="IPR002877">
    <property type="entry name" value="RNA_MeTrfase_FtsJ_dom"/>
</dbReference>
<dbReference type="InterPro" id="IPR015507">
    <property type="entry name" value="rRNA-MeTfrase_E"/>
</dbReference>
<dbReference type="InterPro" id="IPR029063">
    <property type="entry name" value="SAM-dependent_MTases_sf"/>
</dbReference>
<dbReference type="NCBIfam" id="NF008390">
    <property type="entry name" value="PRK11188.1"/>
    <property type="match status" value="1"/>
</dbReference>
<dbReference type="PANTHER" id="PTHR10920">
    <property type="entry name" value="RIBOSOMAL RNA METHYLTRANSFERASE"/>
    <property type="match status" value="1"/>
</dbReference>
<dbReference type="PANTHER" id="PTHR10920:SF18">
    <property type="entry name" value="RRNA METHYLTRANSFERASE 2, MITOCHONDRIAL"/>
    <property type="match status" value="1"/>
</dbReference>
<dbReference type="Pfam" id="PF01728">
    <property type="entry name" value="FtsJ"/>
    <property type="match status" value="1"/>
</dbReference>
<dbReference type="PIRSF" id="PIRSF005461">
    <property type="entry name" value="23S_rRNA_mtase"/>
    <property type="match status" value="1"/>
</dbReference>
<dbReference type="SUPFAM" id="SSF53335">
    <property type="entry name" value="S-adenosyl-L-methionine-dependent methyltransferases"/>
    <property type="match status" value="1"/>
</dbReference>
<organism>
    <name type="scientific">Aliivibrio fischeri (strain MJ11)</name>
    <name type="common">Vibrio fischeri</name>
    <dbReference type="NCBI Taxonomy" id="388396"/>
    <lineage>
        <taxon>Bacteria</taxon>
        <taxon>Pseudomonadati</taxon>
        <taxon>Pseudomonadota</taxon>
        <taxon>Gammaproteobacteria</taxon>
        <taxon>Vibrionales</taxon>
        <taxon>Vibrionaceae</taxon>
        <taxon>Aliivibrio</taxon>
    </lineage>
</organism>
<accession>B5FA72</accession>
<keyword id="KW-0963">Cytoplasm</keyword>
<keyword id="KW-0489">Methyltransferase</keyword>
<keyword id="KW-0698">rRNA processing</keyword>
<keyword id="KW-0949">S-adenosyl-L-methionine</keyword>
<keyword id="KW-0808">Transferase</keyword>
<feature type="chain" id="PRO_1000195026" description="Ribosomal RNA large subunit methyltransferase E">
    <location>
        <begin position="1"/>
        <end position="209"/>
    </location>
</feature>
<feature type="active site" description="Proton acceptor" evidence="1">
    <location>
        <position position="164"/>
    </location>
</feature>
<feature type="binding site" evidence="1">
    <location>
        <position position="63"/>
    </location>
    <ligand>
        <name>S-adenosyl-L-methionine</name>
        <dbReference type="ChEBI" id="CHEBI:59789"/>
    </ligand>
</feature>
<feature type="binding site" evidence="1">
    <location>
        <position position="65"/>
    </location>
    <ligand>
        <name>S-adenosyl-L-methionine</name>
        <dbReference type="ChEBI" id="CHEBI:59789"/>
    </ligand>
</feature>
<feature type="binding site" evidence="1">
    <location>
        <position position="83"/>
    </location>
    <ligand>
        <name>S-adenosyl-L-methionine</name>
        <dbReference type="ChEBI" id="CHEBI:59789"/>
    </ligand>
</feature>
<feature type="binding site" evidence="1">
    <location>
        <position position="99"/>
    </location>
    <ligand>
        <name>S-adenosyl-L-methionine</name>
        <dbReference type="ChEBI" id="CHEBI:59789"/>
    </ligand>
</feature>
<feature type="binding site" evidence="1">
    <location>
        <position position="124"/>
    </location>
    <ligand>
        <name>S-adenosyl-L-methionine</name>
        <dbReference type="ChEBI" id="CHEBI:59789"/>
    </ligand>
</feature>
<proteinExistence type="inferred from homology"/>
<evidence type="ECO:0000255" key="1">
    <source>
        <dbReference type="HAMAP-Rule" id="MF_01547"/>
    </source>
</evidence>
<sequence length="209" mass="23353">MSKNKVSASSGRWLKEHFDDKYVLEAQKRGYRSRAIFKIEEIQNKDKLLKSGMTVVDLGAAPGGWSQYAVEQVGDEGQVIACDILPMDSIAGVSFLQGDFREEAVLDALLERIQPDMVDVVMSDMAPNMSGNLAVDQPRAMYLVELALDMCRQVLAPNGSFTVKVFQGEGFDQYLQEVRNMFKVVKIRKPDSSRARSREVYIVATGYKG</sequence>